<dbReference type="EMBL" id="KF155275">
    <property type="protein sequence ID" value="AHH30793.1"/>
    <property type="molecule type" value="mRNA"/>
</dbReference>
<dbReference type="EMBL" id="KF255416">
    <property type="protein sequence ID" value="AHH30800.1"/>
    <property type="molecule type" value="Genomic_DNA"/>
</dbReference>
<dbReference type="SMR" id="W5U5X5"/>
<dbReference type="ArachnoServer" id="AS002089">
    <property type="toxin name" value="DELTA-miturgitoxin-Cp3a"/>
</dbReference>
<dbReference type="GO" id="GO:0005576">
    <property type="term" value="C:extracellular region"/>
    <property type="evidence" value="ECO:0007669"/>
    <property type="project" value="UniProtKB-SubCell"/>
</dbReference>
<dbReference type="GO" id="GO:0090729">
    <property type="term" value="F:toxin activity"/>
    <property type="evidence" value="ECO:0007669"/>
    <property type="project" value="UniProtKB-KW"/>
</dbReference>
<dbReference type="InterPro" id="IPR019553">
    <property type="entry name" value="Spider_toxin_CSTX_knottin"/>
</dbReference>
<dbReference type="InterPro" id="IPR011142">
    <property type="entry name" value="Spider_toxin_CSTX_Knottin_CS"/>
</dbReference>
<dbReference type="Pfam" id="PF10530">
    <property type="entry name" value="Toxin_35"/>
    <property type="match status" value="2"/>
</dbReference>
<dbReference type="PROSITE" id="PS60029">
    <property type="entry name" value="SPIDER_CSTX"/>
    <property type="match status" value="2"/>
</dbReference>
<keyword id="KW-0903">Direct protein sequencing</keyword>
<keyword id="KW-1015">Disulfide bond</keyword>
<keyword id="KW-0964">Secreted</keyword>
<keyword id="KW-0732">Signal</keyword>
<keyword id="KW-0800">Toxin</keyword>
<comment type="function">
    <text evidence="1 4">Spider venom toxin that exhibits cytolytic activity by forming an alpha-helix across the membrane (By similarity). Lethal to insect larvae (PubMed:24717175).</text>
</comment>
<comment type="subcellular location">
    <subcellularLocation>
        <location evidence="4">Secreted</location>
    </subcellularLocation>
</comment>
<comment type="tissue specificity">
    <text evidence="4">Expressed by the venom gland.</text>
</comment>
<comment type="PTM">
    <text evidence="5">Cleavage of the propeptide depends on the processing quadruplet motif (XXXR, with at least one of X being E).</text>
</comment>
<comment type="mass spectrometry" mass="14980.0" method="MALDI" evidence="4"/>
<comment type="toxic dose">
    <text evidence="4">LD(50) is 33-50 ug/g in S.carnaria larvae.</text>
</comment>
<comment type="toxic dose">
    <text evidence="4">PD(50) is 25-33 ug/g in S.carnaria larvae.</text>
</comment>
<comment type="similarity">
    <text evidence="3">Belongs to the spider toxin CSTX family. Double-CSTX subfamily.</text>
</comment>
<organism evidence="8">
    <name type="scientific">Cheiracanthium punctorium</name>
    <name type="common">Yellow sac spider</name>
    <name type="synonym">Aranea punctoria</name>
    <dbReference type="NCBI Taxonomy" id="682790"/>
    <lineage>
        <taxon>Eukaryota</taxon>
        <taxon>Metazoa</taxon>
        <taxon>Ecdysozoa</taxon>
        <taxon>Arthropoda</taxon>
        <taxon>Chelicerata</taxon>
        <taxon>Arachnida</taxon>
        <taxon>Araneae</taxon>
        <taxon>Araneomorphae</taxon>
        <taxon>Entelegynae</taxon>
        <taxon>Entelegynae incertae sedis</taxon>
        <taxon>Cheiracanthiidae</taxon>
        <taxon>Cheiracanthium</taxon>
    </lineage>
</organism>
<protein>
    <recommendedName>
        <fullName evidence="6">DELTA-miturgitoxin-Cp3a</fullName>
        <shortName evidence="6">DELTA-MGTX-Cp3a</shortName>
    </recommendedName>
    <alternativeName>
        <fullName evidence="5">Toxin CpTx-3a</fullName>
    </alternativeName>
    <alternativeName>
        <fullName evidence="6">Toxin CpTx1-3a</fullName>
    </alternativeName>
</protein>
<sequence length="178" mass="20349">MKALYLLGLLAFLYSCSSENVYDLQPESSEEENPGTFLEAIQEQSRTCVPRDGDCTENRKACCRSKIFQDRCQCRKVSQDKVACSCKQPYWLMKIEEILGDIPEKPKPVEGKCVKKHHDCSQRKNDCCPGSMENYTCKCYNTLEEGAKESEICGCVSKADHQILAQGFRYVKRLHDLR</sequence>
<accession>W5U5X5</accession>
<accession>A0A059T2B8</accession>
<accession>C0HJD5</accession>
<name>TX3A_CHEPU</name>
<evidence type="ECO:0000250" key="1">
    <source>
        <dbReference type="UniProtKB" id="C0HKG7"/>
    </source>
</evidence>
<evidence type="ECO:0000250" key="2">
    <source>
        <dbReference type="UniProtKB" id="P58604"/>
    </source>
</evidence>
<evidence type="ECO:0000255" key="3"/>
<evidence type="ECO:0000269" key="4">
    <source>
    </source>
</evidence>
<evidence type="ECO:0000303" key="5">
    <source>
    </source>
</evidence>
<evidence type="ECO:0000305" key="6"/>
<evidence type="ECO:0000305" key="7">
    <source>
    </source>
</evidence>
<evidence type="ECO:0000312" key="8">
    <source>
        <dbReference type="EMBL" id="AHH30800.1"/>
    </source>
</evidence>
<feature type="signal peptide" evidence="3">
    <location>
        <begin position="1"/>
        <end position="18"/>
    </location>
</feature>
<feature type="propeptide" id="PRO_0000440159" evidence="7">
    <location>
        <begin position="19"/>
        <end position="46"/>
    </location>
</feature>
<feature type="chain" id="PRO_5004874049" description="DELTA-miturgitoxin-Cp3a" evidence="7">
    <location>
        <begin position="47"/>
        <end position="177"/>
    </location>
</feature>
<feature type="short sequence motif" description="Processing quadruplet motif" evidence="5">
    <location>
        <begin position="43"/>
        <end position="46"/>
    </location>
</feature>
<feature type="disulfide bond" evidence="2">
    <location>
        <begin position="48"/>
        <end position="63"/>
    </location>
</feature>
<feature type="disulfide bond" evidence="2">
    <location>
        <begin position="55"/>
        <end position="72"/>
    </location>
</feature>
<feature type="disulfide bond" evidence="2">
    <location>
        <begin position="62"/>
        <end position="86"/>
    </location>
</feature>
<feature type="disulfide bond" evidence="2">
    <location>
        <begin position="74"/>
        <end position="84"/>
    </location>
</feature>
<feature type="disulfide bond" evidence="2">
    <location>
        <begin position="113"/>
        <end position="128"/>
    </location>
</feature>
<feature type="disulfide bond" evidence="2">
    <location>
        <begin position="120"/>
        <end position="137"/>
    </location>
</feature>
<feature type="disulfide bond" evidence="2">
    <location>
        <begin position="127"/>
        <end position="155"/>
    </location>
</feature>
<feature type="disulfide bond" evidence="2">
    <location>
        <begin position="139"/>
        <end position="153"/>
    </location>
</feature>
<feature type="sequence conflict" description="In Ref. 1; AHH30793." evidence="6" ref="1">
    <original>Y</original>
    <variation>D</variation>
    <location>
        <position position="22"/>
    </location>
</feature>
<proteinExistence type="evidence at protein level"/>
<reference evidence="8" key="1">
    <citation type="journal article" date="2014" name="Insect Mol. Biol.">
        <title>Structure of the yellow sac spider Cheiracanthium punctorium genes provides clues to evolution of insecticidal two-domain knottin toxins.</title>
        <authorList>
            <person name="Sachkova M.Y."/>
            <person name="Slavokhotova A.A."/>
            <person name="Grishin E.V."/>
            <person name="Vassilevski A.A."/>
        </authorList>
    </citation>
    <scope>NUCLEOTIDE SEQUENCE [GENOMIC DNA / MRNA]</scope>
    <scope>PROTEIN SEQUENCE OF 47-66</scope>
    <scope>FUNCTION</scope>
    <scope>SUBCELLULAR LOCATION</scope>
    <scope>TISSUE SPECIFICITY</scope>
    <scope>MASS SPECTROMETRY</scope>
    <scope>IDENTIFICATION BY MASS SPECTROMETRY</scope>
    <scope>PQM MOTIF</scope>
    <scope>TOXIC DOSE</scope>
    <source>
        <tissue evidence="5">Venom</tissue>
        <tissue evidence="5">Venom gland</tissue>
    </source>
</reference>